<protein>
    <recommendedName>
        <fullName>Anaphase-promoting complex subunit CDC26</fullName>
    </recommendedName>
    <alternativeName>
        <fullName>Cell division cycle protein 26 homolog</fullName>
    </alternativeName>
</protein>
<comment type="function">
    <text evidence="1">Component of the anaphase promoting complex/cyclosome (APC/C), a cell cycle-regulated E3 ubiquitin ligase that controls progression through mitosis and the G1 phase of the cell cycle. The APC/C complex acts by mediating ubiquitination and subsequent degradation of target proteins: it mainly mediates the formation of 'Lys-11'-linked polyubiquitin chains and, to a lower extent, the formation of 'Lys-48'- and 'Lys-63'-linked polyubiquitin chains. The APC/C complex catalyzes assembly of branched 'Lys-11'-/'Lys-48'-linked branched ubiquitin chains on target proteins. May recruit the E2 ubiquitin-conjugating enzymes to the complex.</text>
</comment>
<comment type="pathway">
    <text evidence="1">Protein modification; protein ubiquitination.</text>
</comment>
<comment type="subunit">
    <text evidence="1">V-shaped homodimer. Interacts with CDC16. The mammalian APC/C is composed at least of 14 distinct subunits ANAPC1, ANAPC2, CDC27/APC3, ANAPC4, ANAPC5, CDC16/APC6, ANAPC7, CDC23/APC8, ANAPC10, ANAPC11, CDC26/APC12, ANAPC13, ANAPC15 and ANAPC16 that assemble into a complex of at least 19 chains with a combined molecular mass of around 1.2 MDa; APC/C interacts with FZR1 and FBXO5.</text>
</comment>
<comment type="subcellular location">
    <subcellularLocation>
        <location evidence="4">Nucleus</location>
    </subcellularLocation>
</comment>
<comment type="similarity">
    <text evidence="4">Belongs to the CDC26 family.</text>
</comment>
<sequence length="85" mass="9761">MLRRKPTRLELKLDDIEEFESIRKDLEARKKQKEDVEGVGTSDGEGAAGLSSDPKSREQMINDRIGYKPQLKSNNRTSQFGNFEF</sequence>
<proteinExistence type="evidence at protein level"/>
<feature type="chain" id="PRO_0000271195" description="Anaphase-promoting complex subunit CDC26">
    <location>
        <begin position="1"/>
        <end position="85"/>
    </location>
</feature>
<feature type="region of interest" description="Disordered" evidence="3">
    <location>
        <begin position="26"/>
        <end position="85"/>
    </location>
</feature>
<feature type="coiled-coil region" evidence="2">
    <location>
        <begin position="7"/>
        <end position="37"/>
    </location>
</feature>
<feature type="compositionally biased region" description="Basic and acidic residues" evidence="3">
    <location>
        <begin position="26"/>
        <end position="36"/>
    </location>
</feature>
<feature type="compositionally biased region" description="Polar residues" evidence="3">
    <location>
        <begin position="71"/>
        <end position="85"/>
    </location>
</feature>
<feature type="modified residue" description="Phosphoserine" evidence="1">
    <location>
        <position position="42"/>
    </location>
</feature>
<reference key="1">
    <citation type="journal article" date="2005" name="Science">
        <title>The transcriptional landscape of the mammalian genome.</title>
        <authorList>
            <person name="Carninci P."/>
            <person name="Kasukawa T."/>
            <person name="Katayama S."/>
            <person name="Gough J."/>
            <person name="Frith M.C."/>
            <person name="Maeda N."/>
            <person name="Oyama R."/>
            <person name="Ravasi T."/>
            <person name="Lenhard B."/>
            <person name="Wells C."/>
            <person name="Kodzius R."/>
            <person name="Shimokawa K."/>
            <person name="Bajic V.B."/>
            <person name="Brenner S.E."/>
            <person name="Batalov S."/>
            <person name="Forrest A.R."/>
            <person name="Zavolan M."/>
            <person name="Davis M.J."/>
            <person name="Wilming L.G."/>
            <person name="Aidinis V."/>
            <person name="Allen J.E."/>
            <person name="Ambesi-Impiombato A."/>
            <person name="Apweiler R."/>
            <person name="Aturaliya R.N."/>
            <person name="Bailey T.L."/>
            <person name="Bansal M."/>
            <person name="Baxter L."/>
            <person name="Beisel K.W."/>
            <person name="Bersano T."/>
            <person name="Bono H."/>
            <person name="Chalk A.M."/>
            <person name="Chiu K.P."/>
            <person name="Choudhary V."/>
            <person name="Christoffels A."/>
            <person name="Clutterbuck D.R."/>
            <person name="Crowe M.L."/>
            <person name="Dalla E."/>
            <person name="Dalrymple B.P."/>
            <person name="de Bono B."/>
            <person name="Della Gatta G."/>
            <person name="di Bernardo D."/>
            <person name="Down T."/>
            <person name="Engstrom P."/>
            <person name="Fagiolini M."/>
            <person name="Faulkner G."/>
            <person name="Fletcher C.F."/>
            <person name="Fukushima T."/>
            <person name="Furuno M."/>
            <person name="Futaki S."/>
            <person name="Gariboldi M."/>
            <person name="Georgii-Hemming P."/>
            <person name="Gingeras T.R."/>
            <person name="Gojobori T."/>
            <person name="Green R.E."/>
            <person name="Gustincich S."/>
            <person name="Harbers M."/>
            <person name="Hayashi Y."/>
            <person name="Hensch T.K."/>
            <person name="Hirokawa N."/>
            <person name="Hill D."/>
            <person name="Huminiecki L."/>
            <person name="Iacono M."/>
            <person name="Ikeo K."/>
            <person name="Iwama A."/>
            <person name="Ishikawa T."/>
            <person name="Jakt M."/>
            <person name="Kanapin A."/>
            <person name="Katoh M."/>
            <person name="Kawasawa Y."/>
            <person name="Kelso J."/>
            <person name="Kitamura H."/>
            <person name="Kitano H."/>
            <person name="Kollias G."/>
            <person name="Krishnan S.P."/>
            <person name="Kruger A."/>
            <person name="Kummerfeld S.K."/>
            <person name="Kurochkin I.V."/>
            <person name="Lareau L.F."/>
            <person name="Lazarevic D."/>
            <person name="Lipovich L."/>
            <person name="Liu J."/>
            <person name="Liuni S."/>
            <person name="McWilliam S."/>
            <person name="Madan Babu M."/>
            <person name="Madera M."/>
            <person name="Marchionni L."/>
            <person name="Matsuda H."/>
            <person name="Matsuzawa S."/>
            <person name="Miki H."/>
            <person name="Mignone F."/>
            <person name="Miyake S."/>
            <person name="Morris K."/>
            <person name="Mottagui-Tabar S."/>
            <person name="Mulder N."/>
            <person name="Nakano N."/>
            <person name="Nakauchi H."/>
            <person name="Ng P."/>
            <person name="Nilsson R."/>
            <person name="Nishiguchi S."/>
            <person name="Nishikawa S."/>
            <person name="Nori F."/>
            <person name="Ohara O."/>
            <person name="Okazaki Y."/>
            <person name="Orlando V."/>
            <person name="Pang K.C."/>
            <person name="Pavan W.J."/>
            <person name="Pavesi G."/>
            <person name="Pesole G."/>
            <person name="Petrovsky N."/>
            <person name="Piazza S."/>
            <person name="Reed J."/>
            <person name="Reid J.F."/>
            <person name="Ring B.Z."/>
            <person name="Ringwald M."/>
            <person name="Rost B."/>
            <person name="Ruan Y."/>
            <person name="Salzberg S.L."/>
            <person name="Sandelin A."/>
            <person name="Schneider C."/>
            <person name="Schoenbach C."/>
            <person name="Sekiguchi K."/>
            <person name="Semple C.A."/>
            <person name="Seno S."/>
            <person name="Sessa L."/>
            <person name="Sheng Y."/>
            <person name="Shibata Y."/>
            <person name="Shimada H."/>
            <person name="Shimada K."/>
            <person name="Silva D."/>
            <person name="Sinclair B."/>
            <person name="Sperling S."/>
            <person name="Stupka E."/>
            <person name="Sugiura K."/>
            <person name="Sultana R."/>
            <person name="Takenaka Y."/>
            <person name="Taki K."/>
            <person name="Tammoja K."/>
            <person name="Tan S.L."/>
            <person name="Tang S."/>
            <person name="Taylor M.S."/>
            <person name="Tegner J."/>
            <person name="Teichmann S.A."/>
            <person name="Ueda H.R."/>
            <person name="van Nimwegen E."/>
            <person name="Verardo R."/>
            <person name="Wei C.L."/>
            <person name="Yagi K."/>
            <person name="Yamanishi H."/>
            <person name="Zabarovsky E."/>
            <person name="Zhu S."/>
            <person name="Zimmer A."/>
            <person name="Hide W."/>
            <person name="Bult C."/>
            <person name="Grimmond S.M."/>
            <person name="Teasdale R.D."/>
            <person name="Liu E.T."/>
            <person name="Brusic V."/>
            <person name="Quackenbush J."/>
            <person name="Wahlestedt C."/>
            <person name="Mattick J.S."/>
            <person name="Hume D.A."/>
            <person name="Kai C."/>
            <person name="Sasaki D."/>
            <person name="Tomaru Y."/>
            <person name="Fukuda S."/>
            <person name="Kanamori-Katayama M."/>
            <person name="Suzuki M."/>
            <person name="Aoki J."/>
            <person name="Arakawa T."/>
            <person name="Iida J."/>
            <person name="Imamura K."/>
            <person name="Itoh M."/>
            <person name="Kato T."/>
            <person name="Kawaji H."/>
            <person name="Kawagashira N."/>
            <person name="Kawashima T."/>
            <person name="Kojima M."/>
            <person name="Kondo S."/>
            <person name="Konno H."/>
            <person name="Nakano K."/>
            <person name="Ninomiya N."/>
            <person name="Nishio T."/>
            <person name="Okada M."/>
            <person name="Plessy C."/>
            <person name="Shibata K."/>
            <person name="Shiraki T."/>
            <person name="Suzuki S."/>
            <person name="Tagami M."/>
            <person name="Waki K."/>
            <person name="Watahiki A."/>
            <person name="Okamura-Oho Y."/>
            <person name="Suzuki H."/>
            <person name="Kawai J."/>
            <person name="Hayashizaki Y."/>
        </authorList>
    </citation>
    <scope>NUCLEOTIDE SEQUENCE [LARGE SCALE MRNA]</scope>
    <source>
        <strain>C57BL/6J</strain>
    </source>
</reference>
<reference key="2">
    <citation type="journal article" date="2004" name="Genome Res.">
        <title>The status, quality, and expansion of the NIH full-length cDNA project: the Mammalian Gene Collection (MGC).</title>
        <authorList>
            <consortium name="The MGC Project Team"/>
        </authorList>
    </citation>
    <scope>NUCLEOTIDE SEQUENCE [LARGE SCALE MRNA]</scope>
    <source>
        <strain>FVB/N</strain>
        <tissue>Mammary tumor</tissue>
    </source>
</reference>
<reference key="3">
    <citation type="journal article" date="2010" name="Cell">
        <title>A tissue-specific atlas of mouse protein phosphorylation and expression.</title>
        <authorList>
            <person name="Huttlin E.L."/>
            <person name="Jedrychowski M.P."/>
            <person name="Elias J.E."/>
            <person name="Goswami T."/>
            <person name="Rad R."/>
            <person name="Beausoleil S.A."/>
            <person name="Villen J."/>
            <person name="Haas W."/>
            <person name="Sowa M.E."/>
            <person name="Gygi S.P."/>
        </authorList>
    </citation>
    <scope>IDENTIFICATION BY MASS SPECTROMETRY [LARGE SCALE ANALYSIS]</scope>
    <source>
        <tissue>Brain</tissue>
        <tissue>Kidney</tissue>
        <tissue>Lung</tissue>
        <tissue>Spleen</tissue>
    </source>
</reference>
<accession>Q99JP4</accession>
<gene>
    <name type="primary">Cdc26</name>
</gene>
<name>CDC26_MOUSE</name>
<dbReference type="EMBL" id="AK012627">
    <property type="protein sequence ID" value="BAC25372.1"/>
    <property type="molecule type" value="mRNA"/>
</dbReference>
<dbReference type="EMBL" id="BC005775">
    <property type="protein sequence ID" value="AAH05775.1"/>
    <property type="molecule type" value="mRNA"/>
</dbReference>
<dbReference type="EMBL" id="BC114350">
    <property type="protein sequence ID" value="AAI14351.1"/>
    <property type="molecule type" value="mRNA"/>
</dbReference>
<dbReference type="CCDS" id="CCDS38774.1"/>
<dbReference type="RefSeq" id="NP_001355170.1">
    <property type="nucleotide sequence ID" value="NM_001368241.1"/>
</dbReference>
<dbReference type="RefSeq" id="NP_647452.1">
    <property type="nucleotide sequence ID" value="NM_139291.4"/>
</dbReference>
<dbReference type="RefSeq" id="XP_006538236.1">
    <property type="nucleotide sequence ID" value="XM_006538173.3"/>
</dbReference>
<dbReference type="SMR" id="Q99JP4"/>
<dbReference type="BioGRID" id="211475">
    <property type="interactions" value="64"/>
</dbReference>
<dbReference type="FunCoup" id="Q99JP4">
    <property type="interactions" value="682"/>
</dbReference>
<dbReference type="IntAct" id="Q99JP4">
    <property type="interactions" value="65"/>
</dbReference>
<dbReference type="STRING" id="10090.ENSMUSP00000081573"/>
<dbReference type="iPTMnet" id="Q99JP4"/>
<dbReference type="PhosphoSitePlus" id="Q99JP4"/>
<dbReference type="jPOST" id="Q99JP4"/>
<dbReference type="PaxDb" id="10090-ENSMUSP00000081573"/>
<dbReference type="PeptideAtlas" id="Q99JP4"/>
<dbReference type="ProteomicsDB" id="281275"/>
<dbReference type="Pumba" id="Q99JP4"/>
<dbReference type="Antibodypedia" id="44232">
    <property type="antibodies" value="103 antibodies from 22 providers"/>
</dbReference>
<dbReference type="Ensembl" id="ENSMUST00000084525.12">
    <property type="protein sequence ID" value="ENSMUSP00000081573.6"/>
    <property type="gene ID" value="ENSMUSG00000066149.12"/>
</dbReference>
<dbReference type="Ensembl" id="ENSMUST00000107459.2">
    <property type="protein sequence ID" value="ENSMUSP00000103083.2"/>
    <property type="gene ID" value="ENSMUSG00000066149.12"/>
</dbReference>
<dbReference type="Ensembl" id="ENSMUST00000134727.8">
    <property type="protein sequence ID" value="ENSMUSP00000120496.2"/>
    <property type="gene ID" value="ENSMUSG00000066149.12"/>
</dbReference>
<dbReference type="GeneID" id="66440"/>
<dbReference type="KEGG" id="mmu:66440"/>
<dbReference type="UCSC" id="uc008teq.1">
    <property type="organism name" value="mouse"/>
</dbReference>
<dbReference type="AGR" id="MGI:1913690"/>
<dbReference type="CTD" id="246184"/>
<dbReference type="MGI" id="MGI:1913690">
    <property type="gene designation" value="Cdc26"/>
</dbReference>
<dbReference type="VEuPathDB" id="HostDB:ENSMUSG00000066149"/>
<dbReference type="eggNOG" id="ENOG502S5GK">
    <property type="taxonomic scope" value="Eukaryota"/>
</dbReference>
<dbReference type="GeneTree" id="ENSGT00390000008457"/>
<dbReference type="HOGENOM" id="CLU_190086_0_0_1"/>
<dbReference type="InParanoid" id="Q99JP4"/>
<dbReference type="OMA" id="NREQMIN"/>
<dbReference type="OrthoDB" id="2422341at2759"/>
<dbReference type="PhylomeDB" id="Q99JP4"/>
<dbReference type="TreeFam" id="TF101057"/>
<dbReference type="Reactome" id="R-MMU-141430">
    <property type="pathway name" value="Inactivation of APC/C via direct inhibition of the APC/C complex"/>
</dbReference>
<dbReference type="Reactome" id="R-MMU-174048">
    <property type="pathway name" value="APC/C:Cdc20 mediated degradation of Cyclin B"/>
</dbReference>
<dbReference type="Reactome" id="R-MMU-174084">
    <property type="pathway name" value="Autodegradation of Cdh1 by Cdh1:APC/C"/>
</dbReference>
<dbReference type="Reactome" id="R-MMU-174154">
    <property type="pathway name" value="APC/C:Cdc20 mediated degradation of Securin"/>
</dbReference>
<dbReference type="Reactome" id="R-MMU-174178">
    <property type="pathway name" value="APC/C:Cdh1 mediated degradation of Cdc20 and other APC/C:Cdh1 targeted proteins in late mitosis/early G1"/>
</dbReference>
<dbReference type="Reactome" id="R-MMU-174184">
    <property type="pathway name" value="Cdc20:Phospho-APC/C mediated degradation of Cyclin A"/>
</dbReference>
<dbReference type="Reactome" id="R-MMU-176407">
    <property type="pathway name" value="Conversion from APC/C:Cdc20 to APC/C:Cdh1 in late anaphase"/>
</dbReference>
<dbReference type="Reactome" id="R-MMU-176408">
    <property type="pathway name" value="Regulation of APC/C activators between G1/S and early anaphase"/>
</dbReference>
<dbReference type="Reactome" id="R-MMU-176409">
    <property type="pathway name" value="APC/C:Cdc20 mediated degradation of mitotic proteins"/>
</dbReference>
<dbReference type="Reactome" id="R-MMU-176412">
    <property type="pathway name" value="Phosphorylation of the APC/C"/>
</dbReference>
<dbReference type="Reactome" id="R-MMU-179409">
    <property type="pathway name" value="APC-Cdc20 mediated degradation of Nek2A"/>
</dbReference>
<dbReference type="Reactome" id="R-MMU-2467813">
    <property type="pathway name" value="Separation of Sister Chromatids"/>
</dbReference>
<dbReference type="Reactome" id="R-MMU-2559582">
    <property type="pathway name" value="Senescence-Associated Secretory Phenotype (SASP)"/>
</dbReference>
<dbReference type="Reactome" id="R-MMU-68867">
    <property type="pathway name" value="Assembly of the pre-replicative complex"/>
</dbReference>
<dbReference type="Reactome" id="R-MMU-69017">
    <property type="pathway name" value="CDK-mediated phosphorylation and removal of Cdc6"/>
</dbReference>
<dbReference type="Reactome" id="R-MMU-983168">
    <property type="pathway name" value="Antigen processing: Ubiquitination &amp; Proteasome degradation"/>
</dbReference>
<dbReference type="UniPathway" id="UPA00143"/>
<dbReference type="BioGRID-ORCS" id="66440">
    <property type="hits" value="22 hits in 75 CRISPR screens"/>
</dbReference>
<dbReference type="ChiTaRS" id="Cdc26">
    <property type="organism name" value="mouse"/>
</dbReference>
<dbReference type="PRO" id="PR:Q99JP4"/>
<dbReference type="Proteomes" id="UP000000589">
    <property type="component" value="Chromosome 4"/>
</dbReference>
<dbReference type="RNAct" id="Q99JP4">
    <property type="molecule type" value="protein"/>
</dbReference>
<dbReference type="Bgee" id="ENSMUSG00000066149">
    <property type="expression patterns" value="Expressed in ventricular zone and 263 other cell types or tissues"/>
</dbReference>
<dbReference type="GO" id="GO:0005680">
    <property type="term" value="C:anaphase-promoting complex"/>
    <property type="evidence" value="ECO:0000250"/>
    <property type="project" value="UniProtKB"/>
</dbReference>
<dbReference type="GO" id="GO:0031145">
    <property type="term" value="P:anaphase-promoting complex-dependent catabolic process"/>
    <property type="evidence" value="ECO:0000250"/>
    <property type="project" value="UniProtKB"/>
</dbReference>
<dbReference type="GO" id="GO:0051301">
    <property type="term" value="P:cell division"/>
    <property type="evidence" value="ECO:0007669"/>
    <property type="project" value="UniProtKB-KW"/>
</dbReference>
<dbReference type="GO" id="GO:0141198">
    <property type="term" value="P:protein branched polyubiquitination"/>
    <property type="evidence" value="ECO:0000250"/>
    <property type="project" value="UniProtKB"/>
</dbReference>
<dbReference type="GO" id="GO:0070979">
    <property type="term" value="P:protein K11-linked ubiquitination"/>
    <property type="evidence" value="ECO:0000250"/>
    <property type="project" value="UniProtKB"/>
</dbReference>
<dbReference type="GO" id="GO:0070936">
    <property type="term" value="P:protein K48-linked ubiquitination"/>
    <property type="evidence" value="ECO:0000250"/>
    <property type="project" value="UniProtKB"/>
</dbReference>
<dbReference type="InterPro" id="IPR018860">
    <property type="entry name" value="APC_suCDC26"/>
</dbReference>
<dbReference type="PANTHER" id="PTHR28579">
    <property type="entry name" value="ANAPHASE-PROMOTING COMPLEX SUBUNIT CDC26"/>
    <property type="match status" value="1"/>
</dbReference>
<dbReference type="PANTHER" id="PTHR28579:SF1">
    <property type="entry name" value="ANAPHASE-PROMOTING COMPLEX SUBUNIT CDC26"/>
    <property type="match status" value="1"/>
</dbReference>
<dbReference type="Pfam" id="PF10471">
    <property type="entry name" value="ANAPC_CDC26"/>
    <property type="match status" value="1"/>
</dbReference>
<evidence type="ECO:0000250" key="1">
    <source>
        <dbReference type="UniProtKB" id="Q8NHZ8"/>
    </source>
</evidence>
<evidence type="ECO:0000255" key="2"/>
<evidence type="ECO:0000256" key="3">
    <source>
        <dbReference type="SAM" id="MobiDB-lite"/>
    </source>
</evidence>
<evidence type="ECO:0000305" key="4"/>
<keyword id="KW-0131">Cell cycle</keyword>
<keyword id="KW-0132">Cell division</keyword>
<keyword id="KW-0175">Coiled coil</keyword>
<keyword id="KW-0498">Mitosis</keyword>
<keyword id="KW-0539">Nucleus</keyword>
<keyword id="KW-0597">Phosphoprotein</keyword>
<keyword id="KW-1185">Reference proteome</keyword>
<keyword id="KW-0833">Ubl conjugation pathway</keyword>
<organism>
    <name type="scientific">Mus musculus</name>
    <name type="common">Mouse</name>
    <dbReference type="NCBI Taxonomy" id="10090"/>
    <lineage>
        <taxon>Eukaryota</taxon>
        <taxon>Metazoa</taxon>
        <taxon>Chordata</taxon>
        <taxon>Craniata</taxon>
        <taxon>Vertebrata</taxon>
        <taxon>Euteleostomi</taxon>
        <taxon>Mammalia</taxon>
        <taxon>Eutheria</taxon>
        <taxon>Euarchontoglires</taxon>
        <taxon>Glires</taxon>
        <taxon>Rodentia</taxon>
        <taxon>Myomorpha</taxon>
        <taxon>Muroidea</taxon>
        <taxon>Muridae</taxon>
        <taxon>Murinae</taxon>
        <taxon>Mus</taxon>
        <taxon>Mus</taxon>
    </lineage>
</organism>